<comment type="function">
    <text evidence="1 3">Monooxygenase; part of the gene cluster that mediates the biosynthesis of the aspoquinolone mycotoxins (PubMed:25251934). The role of asqM within the aspoquinolone pathway has still to be determined (Probable). The first step of the pathway is catalyzed by the nonribosomal peptide synthetase asqK that condenses anthranilic acid and O-methyl-L-tyrosine to produce 4'-methoxycyclopeptin. 4'-methoxycyclopeptin is then converted to 4'-methoxydehydrocyclopeptin by the ketoglutarate-dependent dioxygenase asqJ. AsqJ also converts its first product 4'-methoxydehydrocyclopeptin to 4'-methoxycyclopenin. The following conversion of 4'-methoxycyclopenin into 4'-methoxyviridicatin is catalyzed by the cyclopenase asqI. 4'-methoxyviridicatin is the precursor of quinolone natural products, and is further converted to quinolinone B. The prenyltransferase asqH1 then catalyzes the canonical Friedel-Crafts alkylation of quinolinone B with dimethylallyl cation to yield dimethylallyl quinolone, which is subjected to FAD-dependent dehydrogenation by the FAD-linked oxidoreductase asqF to yield conjugated aryl diene. The delta(3') double bond then serves as the site of the second alkylation with DMAPP catalyzed by the prenyltransferase asqH2 to yield a carbenium ion intermediate, which can be attacked by H(2)O to yield a styrenyl quinolone containing a C3'-hydroxyprenyl chain. The FAD-dependent monooxygenase asqG performs epoxidation of the terminal C7'-C8' olefin. Finally, after dehydratation of the epoxide at C3 by asqC, the quinolone epoxide rearrangement protein asqO catalyzes an enzymatic 3-exo-tet cyclization to yield the cyclopropyl-THF ring system in aspoquinolone (Probable).</text>
</comment>
<comment type="cofactor">
    <cofactor evidence="3">
        <name>FAD</name>
        <dbReference type="ChEBI" id="CHEBI:57692"/>
    </cofactor>
</comment>
<comment type="pathway">
    <text evidence="4">Secondary metabolite biosynthesis.</text>
</comment>
<comment type="pathway">
    <text evidence="4">Alkaloid biosynthesis.</text>
</comment>
<comment type="pathway">
    <text evidence="4">Mycotoxin biosynthesis.</text>
</comment>
<comment type="similarity">
    <text evidence="3">Belongs to the aromatic-ring hydroxylase family.</text>
</comment>
<organism>
    <name type="scientific">Emericella nidulans (strain FGSC A4 / ATCC 38163 / CBS 112.46 / NRRL 194 / M139)</name>
    <name type="common">Aspergillus nidulans</name>
    <dbReference type="NCBI Taxonomy" id="227321"/>
    <lineage>
        <taxon>Eukaryota</taxon>
        <taxon>Fungi</taxon>
        <taxon>Dikarya</taxon>
        <taxon>Ascomycota</taxon>
        <taxon>Pezizomycotina</taxon>
        <taxon>Eurotiomycetes</taxon>
        <taxon>Eurotiomycetidae</taxon>
        <taxon>Eurotiales</taxon>
        <taxon>Aspergillaceae</taxon>
        <taxon>Aspergillus</taxon>
        <taxon>Aspergillus subgen. Nidulantes</taxon>
    </lineage>
</organism>
<protein>
    <recommendedName>
        <fullName evidence="2">Monooxygenase asqM</fullName>
        <ecNumber evidence="3">1.-.-.-</ecNumber>
    </recommendedName>
    <alternativeName>
        <fullName evidence="3">4'-methoxyviridicatin/aspoquinolone biosynthesis cluster protein asqM</fullName>
    </alternativeName>
    <alternativeName>
        <fullName evidence="2">Aspoquinolone biosynthesis protein M</fullName>
    </alternativeName>
</protein>
<evidence type="ECO:0000269" key="1">
    <source>
    </source>
</evidence>
<evidence type="ECO:0000303" key="2">
    <source>
    </source>
</evidence>
<evidence type="ECO:0000305" key="3"/>
<evidence type="ECO:0000305" key="4">
    <source>
    </source>
</evidence>
<reference key="1">
    <citation type="journal article" date="2005" name="Nature">
        <title>Sequencing of Aspergillus nidulans and comparative analysis with A. fumigatus and A. oryzae.</title>
        <authorList>
            <person name="Galagan J.E."/>
            <person name="Calvo S.E."/>
            <person name="Cuomo C."/>
            <person name="Ma L.-J."/>
            <person name="Wortman J.R."/>
            <person name="Batzoglou S."/>
            <person name="Lee S.-I."/>
            <person name="Bastuerkmen M."/>
            <person name="Spevak C.C."/>
            <person name="Clutterbuck J."/>
            <person name="Kapitonov V."/>
            <person name="Jurka J."/>
            <person name="Scazzocchio C."/>
            <person name="Farman M.L."/>
            <person name="Butler J."/>
            <person name="Purcell S."/>
            <person name="Harris S."/>
            <person name="Braus G.H."/>
            <person name="Draht O."/>
            <person name="Busch S."/>
            <person name="D'Enfert C."/>
            <person name="Bouchier C."/>
            <person name="Goldman G.H."/>
            <person name="Bell-Pedersen D."/>
            <person name="Griffiths-Jones S."/>
            <person name="Doonan J.H."/>
            <person name="Yu J."/>
            <person name="Vienken K."/>
            <person name="Pain A."/>
            <person name="Freitag M."/>
            <person name="Selker E.U."/>
            <person name="Archer D.B."/>
            <person name="Penalva M.A."/>
            <person name="Oakley B.R."/>
            <person name="Momany M."/>
            <person name="Tanaka T."/>
            <person name="Kumagai T."/>
            <person name="Asai K."/>
            <person name="Machida M."/>
            <person name="Nierman W.C."/>
            <person name="Denning D.W."/>
            <person name="Caddick M.X."/>
            <person name="Hynes M."/>
            <person name="Paoletti M."/>
            <person name="Fischer R."/>
            <person name="Miller B.L."/>
            <person name="Dyer P.S."/>
            <person name="Sachs M.S."/>
            <person name="Osmani S.A."/>
            <person name="Birren B.W."/>
        </authorList>
    </citation>
    <scope>NUCLEOTIDE SEQUENCE [LARGE SCALE GENOMIC DNA]</scope>
    <source>
        <strain>FGSC A4 / ATCC 38163 / CBS 112.46 / NRRL 194 / M139</strain>
    </source>
</reference>
<reference key="2">
    <citation type="journal article" date="2009" name="Fungal Genet. Biol.">
        <title>The 2008 update of the Aspergillus nidulans genome annotation: a community effort.</title>
        <authorList>
            <person name="Wortman J.R."/>
            <person name="Gilsenan J.M."/>
            <person name="Joardar V."/>
            <person name="Deegan J."/>
            <person name="Clutterbuck J."/>
            <person name="Andersen M.R."/>
            <person name="Archer D."/>
            <person name="Bencina M."/>
            <person name="Braus G."/>
            <person name="Coutinho P."/>
            <person name="von Dohren H."/>
            <person name="Doonan J."/>
            <person name="Driessen A.J."/>
            <person name="Durek P."/>
            <person name="Espeso E."/>
            <person name="Fekete E."/>
            <person name="Flipphi M."/>
            <person name="Estrada C.G."/>
            <person name="Geysens S."/>
            <person name="Goldman G."/>
            <person name="de Groot P.W."/>
            <person name="Hansen K."/>
            <person name="Harris S.D."/>
            <person name="Heinekamp T."/>
            <person name="Helmstaedt K."/>
            <person name="Henrissat B."/>
            <person name="Hofmann G."/>
            <person name="Homan T."/>
            <person name="Horio T."/>
            <person name="Horiuchi H."/>
            <person name="James S."/>
            <person name="Jones M."/>
            <person name="Karaffa L."/>
            <person name="Karanyi Z."/>
            <person name="Kato M."/>
            <person name="Keller N."/>
            <person name="Kelly D.E."/>
            <person name="Kiel J.A."/>
            <person name="Kim J.M."/>
            <person name="van der Klei I.J."/>
            <person name="Klis F.M."/>
            <person name="Kovalchuk A."/>
            <person name="Krasevec N."/>
            <person name="Kubicek C.P."/>
            <person name="Liu B."/>
            <person name="Maccabe A."/>
            <person name="Meyer V."/>
            <person name="Mirabito P."/>
            <person name="Miskei M."/>
            <person name="Mos M."/>
            <person name="Mullins J."/>
            <person name="Nelson D.R."/>
            <person name="Nielsen J."/>
            <person name="Oakley B.R."/>
            <person name="Osmani S.A."/>
            <person name="Pakula T."/>
            <person name="Paszewski A."/>
            <person name="Paulsen I."/>
            <person name="Pilsyk S."/>
            <person name="Pocsi I."/>
            <person name="Punt P.J."/>
            <person name="Ram A.F."/>
            <person name="Ren Q."/>
            <person name="Robellet X."/>
            <person name="Robson G."/>
            <person name="Seiboth B."/>
            <person name="van Solingen P."/>
            <person name="Specht T."/>
            <person name="Sun J."/>
            <person name="Taheri-Talesh N."/>
            <person name="Takeshita N."/>
            <person name="Ussery D."/>
            <person name="vanKuyk P.A."/>
            <person name="Visser H."/>
            <person name="van de Vondervoort P.J."/>
            <person name="de Vries R.P."/>
            <person name="Walton J."/>
            <person name="Xiang X."/>
            <person name="Xiong Y."/>
            <person name="Zeng A.P."/>
            <person name="Brandt B.W."/>
            <person name="Cornell M.J."/>
            <person name="van den Hondel C.A."/>
            <person name="Visser J."/>
            <person name="Oliver S.G."/>
            <person name="Turner G."/>
        </authorList>
    </citation>
    <scope>GENOME REANNOTATION</scope>
    <source>
        <strain>FGSC A4 / ATCC 38163 / CBS 112.46 / NRRL 194 / M139</strain>
    </source>
</reference>
<reference key="3">
    <citation type="journal article" date="2014" name="Angew. Chem. Int. Ed.">
        <title>Non-heme dioxygenase catalyzes atypical oxidations of 6,7-bicyclic systems to form the 6,6-quinolone core of viridicatin-type fungal alkaloids.</title>
        <authorList>
            <person name="Ishikawa N."/>
            <person name="Tanaka H."/>
            <person name="Koyama F."/>
            <person name="Noguchi H."/>
            <person name="Wang C.C."/>
            <person name="Hotta K."/>
            <person name="Watanabe K."/>
        </authorList>
    </citation>
    <scope>FUNCTION</scope>
    <scope>PATHWAY</scope>
</reference>
<proteinExistence type="inferred from homology"/>
<gene>
    <name evidence="2" type="primary">asqM</name>
    <name type="ORF">AN9224</name>
</gene>
<sequence length="443" mass="48684">MLRQSDFKIAIVGAGPAGLTLASRLTASSHSFDFTVFERRDKPDPSQVSVPCANLDLHRELGLRAIKGCGLYPQFLEVQSACTEQTRILDITGTVLSDTTGDGERPEISRNALIQLLLESIPEERIRWNTKVLDITPANCSRSKGKECLRFTDTSIATTPISEEIYDLIVGADGAWSRIRAAIPNAPKPIYSGVCYMTMYLRISREQYPDMDNMIGSGTFAVVGDNKLLLAQRAIHGTLRVCLFLHSKCLAAVRKELLASMHNHNTGPCPLLNPDDLINSLPSNPKTLQELLLTHDDFFASWSEDIKRLLRIAFESQVADAEIITRPMYMLPLVPYPYAHQRGIALVGDAASLMTPFAGRGVNVAMADSLDLAEELERLHLVTVSSSASTPAAIFADKLEGALSAYERTAYTRAKDAMELTWRNLCLSFSEKASDLFAAVMAS</sequence>
<accession>Q5AR56</accession>
<accession>C8VJQ7</accession>
<feature type="chain" id="PRO_0000437625" description="Monooxygenase asqM">
    <location>
        <begin position="1"/>
        <end position="443"/>
    </location>
</feature>
<keyword id="KW-0274">FAD</keyword>
<keyword id="KW-0285">Flavoprotein</keyword>
<keyword id="KW-0503">Monooxygenase</keyword>
<keyword id="KW-0560">Oxidoreductase</keyword>
<keyword id="KW-1185">Reference proteome</keyword>
<dbReference type="EC" id="1.-.-.-" evidence="3"/>
<dbReference type="EMBL" id="BN001306">
    <property type="protein sequence ID" value="CBF82286.1"/>
    <property type="molecule type" value="Genomic_DNA"/>
</dbReference>
<dbReference type="EMBL" id="AACD01000170">
    <property type="protein sequence ID" value="EAA61515.1"/>
    <property type="molecule type" value="Genomic_DNA"/>
</dbReference>
<dbReference type="RefSeq" id="XP_682493.1">
    <property type="nucleotide sequence ID" value="XM_677401.1"/>
</dbReference>
<dbReference type="SMR" id="Q5AR56"/>
<dbReference type="STRING" id="227321.Q5AR56"/>
<dbReference type="EnsemblFungi" id="CBF82286">
    <property type="protein sequence ID" value="CBF82286"/>
    <property type="gene ID" value="ANIA_09224"/>
</dbReference>
<dbReference type="KEGG" id="ani:ANIA_09224"/>
<dbReference type="eggNOG" id="ENOG502SKV8">
    <property type="taxonomic scope" value="Eukaryota"/>
</dbReference>
<dbReference type="HOGENOM" id="CLU_009665_4_0_1"/>
<dbReference type="InParanoid" id="Q5AR56"/>
<dbReference type="OMA" id="DITPANC"/>
<dbReference type="OrthoDB" id="655030at2759"/>
<dbReference type="BioCyc" id="MetaCyc:MONOMER-124176"/>
<dbReference type="Proteomes" id="UP000000560">
    <property type="component" value="Chromosome VI"/>
</dbReference>
<dbReference type="GO" id="GO:0071949">
    <property type="term" value="F:FAD binding"/>
    <property type="evidence" value="ECO:0007669"/>
    <property type="project" value="InterPro"/>
</dbReference>
<dbReference type="GO" id="GO:0004497">
    <property type="term" value="F:monooxygenase activity"/>
    <property type="evidence" value="ECO:0007669"/>
    <property type="project" value="UniProtKB-KW"/>
</dbReference>
<dbReference type="GO" id="GO:0009058">
    <property type="term" value="P:biosynthetic process"/>
    <property type="evidence" value="ECO:0007669"/>
    <property type="project" value="UniProtKB-ARBA"/>
</dbReference>
<dbReference type="Gene3D" id="3.50.50.60">
    <property type="entry name" value="FAD/NAD(P)-binding domain"/>
    <property type="match status" value="1"/>
</dbReference>
<dbReference type="InterPro" id="IPR002938">
    <property type="entry name" value="FAD-bd"/>
</dbReference>
<dbReference type="InterPro" id="IPR036188">
    <property type="entry name" value="FAD/NAD-bd_sf"/>
</dbReference>
<dbReference type="PANTHER" id="PTHR46972:SF1">
    <property type="entry name" value="FAD DEPENDENT OXIDOREDUCTASE DOMAIN-CONTAINING PROTEIN"/>
    <property type="match status" value="1"/>
</dbReference>
<dbReference type="PANTHER" id="PTHR46972">
    <property type="entry name" value="MONOOXYGENASE ASQM-RELATED"/>
    <property type="match status" value="1"/>
</dbReference>
<dbReference type="Pfam" id="PF01494">
    <property type="entry name" value="FAD_binding_3"/>
    <property type="match status" value="1"/>
</dbReference>
<dbReference type="Pfam" id="PF13450">
    <property type="entry name" value="NAD_binding_8"/>
    <property type="match status" value="1"/>
</dbReference>
<dbReference type="PRINTS" id="PR00420">
    <property type="entry name" value="RNGMNOXGNASE"/>
</dbReference>
<dbReference type="SUPFAM" id="SSF51905">
    <property type="entry name" value="FAD/NAD(P)-binding domain"/>
    <property type="match status" value="1"/>
</dbReference>
<name>ASQM_EMENI</name>